<proteinExistence type="inferred from homology"/>
<protein>
    <recommendedName>
        <fullName evidence="1">Deoxyuridine 5'-triphosphate nucleotidohydrolase</fullName>
        <shortName evidence="1">dUTPase</shortName>
        <ecNumber evidence="1">3.6.1.23</ecNumber>
    </recommendedName>
    <alternativeName>
        <fullName evidence="1">dUTP pyrophosphatase</fullName>
    </alternativeName>
</protein>
<reference key="1">
    <citation type="submission" date="2006-08" db="EMBL/GenBank/DDBJ databases">
        <title>Complete sequence of chromosome 1 of Burkholderia cenocepacia HI2424.</title>
        <authorList>
            <person name="Copeland A."/>
            <person name="Lucas S."/>
            <person name="Lapidus A."/>
            <person name="Barry K."/>
            <person name="Detter J.C."/>
            <person name="Glavina del Rio T."/>
            <person name="Hammon N."/>
            <person name="Israni S."/>
            <person name="Pitluck S."/>
            <person name="Chain P."/>
            <person name="Malfatti S."/>
            <person name="Shin M."/>
            <person name="Vergez L."/>
            <person name="Schmutz J."/>
            <person name="Larimer F."/>
            <person name="Land M."/>
            <person name="Hauser L."/>
            <person name="Kyrpides N."/>
            <person name="Kim E."/>
            <person name="LiPuma J.J."/>
            <person name="Gonzalez C.F."/>
            <person name="Konstantinidis K."/>
            <person name="Tiedje J.M."/>
            <person name="Richardson P."/>
        </authorList>
    </citation>
    <scope>NUCLEOTIDE SEQUENCE [LARGE SCALE GENOMIC DNA]</scope>
    <source>
        <strain>HI2424</strain>
    </source>
</reference>
<evidence type="ECO:0000255" key="1">
    <source>
        <dbReference type="HAMAP-Rule" id="MF_00116"/>
    </source>
</evidence>
<gene>
    <name evidence="1" type="primary">dut</name>
    <name type="ordered locus">Bcen2424_2515</name>
</gene>
<comment type="function">
    <text evidence="1">This enzyme is involved in nucleotide metabolism: it produces dUMP, the immediate precursor of thymidine nucleotides and it decreases the intracellular concentration of dUTP so that uracil cannot be incorporated into DNA.</text>
</comment>
<comment type="catalytic activity">
    <reaction evidence="1">
        <text>dUTP + H2O = dUMP + diphosphate + H(+)</text>
        <dbReference type="Rhea" id="RHEA:10248"/>
        <dbReference type="ChEBI" id="CHEBI:15377"/>
        <dbReference type="ChEBI" id="CHEBI:15378"/>
        <dbReference type="ChEBI" id="CHEBI:33019"/>
        <dbReference type="ChEBI" id="CHEBI:61555"/>
        <dbReference type="ChEBI" id="CHEBI:246422"/>
        <dbReference type="EC" id="3.6.1.23"/>
    </reaction>
</comment>
<comment type="cofactor">
    <cofactor evidence="1">
        <name>Mg(2+)</name>
        <dbReference type="ChEBI" id="CHEBI:18420"/>
    </cofactor>
</comment>
<comment type="pathway">
    <text evidence="1">Pyrimidine metabolism; dUMP biosynthesis; dUMP from dCTP (dUTP route): step 2/2.</text>
</comment>
<comment type="similarity">
    <text evidence="1">Belongs to the dUTPase family.</text>
</comment>
<name>DUT_BURCH</name>
<organism>
    <name type="scientific">Burkholderia cenocepacia (strain HI2424)</name>
    <dbReference type="NCBI Taxonomy" id="331272"/>
    <lineage>
        <taxon>Bacteria</taxon>
        <taxon>Pseudomonadati</taxon>
        <taxon>Pseudomonadota</taxon>
        <taxon>Betaproteobacteria</taxon>
        <taxon>Burkholderiales</taxon>
        <taxon>Burkholderiaceae</taxon>
        <taxon>Burkholderia</taxon>
        <taxon>Burkholderia cepacia complex</taxon>
    </lineage>
</organism>
<dbReference type="EC" id="3.6.1.23" evidence="1"/>
<dbReference type="EMBL" id="CP000458">
    <property type="protein sequence ID" value="ABK09265.1"/>
    <property type="molecule type" value="Genomic_DNA"/>
</dbReference>
<dbReference type="RefSeq" id="WP_011546016.1">
    <property type="nucleotide sequence ID" value="NC_008542.1"/>
</dbReference>
<dbReference type="SMR" id="A0K9T8"/>
<dbReference type="GeneID" id="83049329"/>
<dbReference type="KEGG" id="bch:Bcen2424_2515"/>
<dbReference type="HOGENOM" id="CLU_068508_1_1_4"/>
<dbReference type="UniPathway" id="UPA00610">
    <property type="reaction ID" value="UER00666"/>
</dbReference>
<dbReference type="GO" id="GO:0004170">
    <property type="term" value="F:dUTP diphosphatase activity"/>
    <property type="evidence" value="ECO:0007669"/>
    <property type="project" value="UniProtKB-UniRule"/>
</dbReference>
<dbReference type="GO" id="GO:0000287">
    <property type="term" value="F:magnesium ion binding"/>
    <property type="evidence" value="ECO:0007669"/>
    <property type="project" value="UniProtKB-UniRule"/>
</dbReference>
<dbReference type="GO" id="GO:0006226">
    <property type="term" value="P:dUMP biosynthetic process"/>
    <property type="evidence" value="ECO:0007669"/>
    <property type="project" value="UniProtKB-UniRule"/>
</dbReference>
<dbReference type="GO" id="GO:0046081">
    <property type="term" value="P:dUTP catabolic process"/>
    <property type="evidence" value="ECO:0007669"/>
    <property type="project" value="InterPro"/>
</dbReference>
<dbReference type="CDD" id="cd07557">
    <property type="entry name" value="trimeric_dUTPase"/>
    <property type="match status" value="1"/>
</dbReference>
<dbReference type="FunFam" id="2.70.40.10:FF:000002">
    <property type="entry name" value="dUTP diphosphatase"/>
    <property type="match status" value="1"/>
</dbReference>
<dbReference type="Gene3D" id="2.70.40.10">
    <property type="match status" value="1"/>
</dbReference>
<dbReference type="HAMAP" id="MF_00116">
    <property type="entry name" value="dUTPase_bact"/>
    <property type="match status" value="1"/>
</dbReference>
<dbReference type="InterPro" id="IPR008181">
    <property type="entry name" value="dUTPase"/>
</dbReference>
<dbReference type="InterPro" id="IPR029054">
    <property type="entry name" value="dUTPase-like"/>
</dbReference>
<dbReference type="InterPro" id="IPR036157">
    <property type="entry name" value="dUTPase-like_sf"/>
</dbReference>
<dbReference type="InterPro" id="IPR033704">
    <property type="entry name" value="dUTPase_trimeric"/>
</dbReference>
<dbReference type="NCBIfam" id="TIGR00576">
    <property type="entry name" value="dut"/>
    <property type="match status" value="1"/>
</dbReference>
<dbReference type="NCBIfam" id="NF001862">
    <property type="entry name" value="PRK00601.1"/>
    <property type="match status" value="1"/>
</dbReference>
<dbReference type="PANTHER" id="PTHR11241">
    <property type="entry name" value="DEOXYURIDINE 5'-TRIPHOSPHATE NUCLEOTIDOHYDROLASE"/>
    <property type="match status" value="1"/>
</dbReference>
<dbReference type="PANTHER" id="PTHR11241:SF0">
    <property type="entry name" value="DEOXYURIDINE 5'-TRIPHOSPHATE NUCLEOTIDOHYDROLASE"/>
    <property type="match status" value="1"/>
</dbReference>
<dbReference type="Pfam" id="PF00692">
    <property type="entry name" value="dUTPase"/>
    <property type="match status" value="1"/>
</dbReference>
<dbReference type="SUPFAM" id="SSF51283">
    <property type="entry name" value="dUTPase-like"/>
    <property type="match status" value="1"/>
</dbReference>
<keyword id="KW-0378">Hydrolase</keyword>
<keyword id="KW-0460">Magnesium</keyword>
<keyword id="KW-0479">Metal-binding</keyword>
<keyword id="KW-0546">Nucleotide metabolism</keyword>
<feature type="chain" id="PRO_1000015450" description="Deoxyuridine 5'-triphosphate nucleotidohydrolase">
    <location>
        <begin position="1"/>
        <end position="148"/>
    </location>
</feature>
<feature type="binding site" evidence="1">
    <location>
        <begin position="67"/>
        <end position="69"/>
    </location>
    <ligand>
        <name>substrate</name>
    </ligand>
</feature>
<feature type="binding site" evidence="1">
    <location>
        <position position="80"/>
    </location>
    <ligand>
        <name>substrate</name>
    </ligand>
</feature>
<feature type="binding site" evidence="1">
    <location>
        <begin position="84"/>
        <end position="86"/>
    </location>
    <ligand>
        <name>substrate</name>
    </ligand>
</feature>
<feature type="binding site" evidence="1">
    <location>
        <position position="94"/>
    </location>
    <ligand>
        <name>substrate</name>
    </ligand>
</feature>
<accession>A0K9T8</accession>
<sequence length="148" mass="15885">MKLDLKILDARMRDYLPAYATTGSAGLDLRACLDAPVTLQPGETTLVPTGLAIHLADPGYAALILPRSGLGHKHGIVLGNLVGLIDSDYQGQLMVSTWNRGQTAFVLNPFERLAQLVIVPVVQAQFNIVDEFTESDRGEGGFGSTGRH</sequence>